<gene>
    <name evidence="1" type="primary">hisS</name>
    <name type="ordered locus">Asuc_2026</name>
</gene>
<comment type="catalytic activity">
    <reaction evidence="1">
        <text>tRNA(His) + L-histidine + ATP = L-histidyl-tRNA(His) + AMP + diphosphate + H(+)</text>
        <dbReference type="Rhea" id="RHEA:17313"/>
        <dbReference type="Rhea" id="RHEA-COMP:9665"/>
        <dbReference type="Rhea" id="RHEA-COMP:9689"/>
        <dbReference type="ChEBI" id="CHEBI:15378"/>
        <dbReference type="ChEBI" id="CHEBI:30616"/>
        <dbReference type="ChEBI" id="CHEBI:33019"/>
        <dbReference type="ChEBI" id="CHEBI:57595"/>
        <dbReference type="ChEBI" id="CHEBI:78442"/>
        <dbReference type="ChEBI" id="CHEBI:78527"/>
        <dbReference type="ChEBI" id="CHEBI:456215"/>
        <dbReference type="EC" id="6.1.1.21"/>
    </reaction>
</comment>
<comment type="subunit">
    <text evidence="1">Homodimer.</text>
</comment>
<comment type="subcellular location">
    <subcellularLocation>
        <location evidence="1">Cytoplasm</location>
    </subcellularLocation>
</comment>
<comment type="similarity">
    <text evidence="1">Belongs to the class-II aminoacyl-tRNA synthetase family.</text>
</comment>
<feature type="chain" id="PRO_1000071400" description="Histidine--tRNA ligase">
    <location>
        <begin position="1"/>
        <end position="423"/>
    </location>
</feature>
<keyword id="KW-0030">Aminoacyl-tRNA synthetase</keyword>
<keyword id="KW-0067">ATP-binding</keyword>
<keyword id="KW-0963">Cytoplasm</keyword>
<keyword id="KW-0436">Ligase</keyword>
<keyword id="KW-0547">Nucleotide-binding</keyword>
<keyword id="KW-0648">Protein biosynthesis</keyword>
<keyword id="KW-1185">Reference proteome</keyword>
<accession>A6VQX5</accession>
<dbReference type="EC" id="6.1.1.21" evidence="1"/>
<dbReference type="EMBL" id="CP000746">
    <property type="protein sequence ID" value="ABR75372.1"/>
    <property type="molecule type" value="Genomic_DNA"/>
</dbReference>
<dbReference type="RefSeq" id="WP_012073748.1">
    <property type="nucleotide sequence ID" value="NC_009655.1"/>
</dbReference>
<dbReference type="SMR" id="A6VQX5"/>
<dbReference type="STRING" id="339671.Asuc_2026"/>
<dbReference type="KEGG" id="asu:Asuc_2026"/>
<dbReference type="eggNOG" id="COG0124">
    <property type="taxonomic scope" value="Bacteria"/>
</dbReference>
<dbReference type="HOGENOM" id="CLU_025113_1_1_6"/>
<dbReference type="OrthoDB" id="9800814at2"/>
<dbReference type="Proteomes" id="UP000001114">
    <property type="component" value="Chromosome"/>
</dbReference>
<dbReference type="GO" id="GO:0005737">
    <property type="term" value="C:cytoplasm"/>
    <property type="evidence" value="ECO:0007669"/>
    <property type="project" value="UniProtKB-SubCell"/>
</dbReference>
<dbReference type="GO" id="GO:0005524">
    <property type="term" value="F:ATP binding"/>
    <property type="evidence" value="ECO:0007669"/>
    <property type="project" value="UniProtKB-UniRule"/>
</dbReference>
<dbReference type="GO" id="GO:0004821">
    <property type="term" value="F:histidine-tRNA ligase activity"/>
    <property type="evidence" value="ECO:0007669"/>
    <property type="project" value="UniProtKB-UniRule"/>
</dbReference>
<dbReference type="GO" id="GO:0006427">
    <property type="term" value="P:histidyl-tRNA aminoacylation"/>
    <property type="evidence" value="ECO:0007669"/>
    <property type="project" value="UniProtKB-UniRule"/>
</dbReference>
<dbReference type="CDD" id="cd00773">
    <property type="entry name" value="HisRS-like_core"/>
    <property type="match status" value="1"/>
</dbReference>
<dbReference type="CDD" id="cd00859">
    <property type="entry name" value="HisRS_anticodon"/>
    <property type="match status" value="1"/>
</dbReference>
<dbReference type="FunFam" id="3.30.930.10:FF:000005">
    <property type="entry name" value="Histidine--tRNA ligase"/>
    <property type="match status" value="1"/>
</dbReference>
<dbReference type="Gene3D" id="3.40.50.800">
    <property type="entry name" value="Anticodon-binding domain"/>
    <property type="match status" value="1"/>
</dbReference>
<dbReference type="Gene3D" id="3.30.930.10">
    <property type="entry name" value="Bira Bifunctional Protein, Domain 2"/>
    <property type="match status" value="1"/>
</dbReference>
<dbReference type="HAMAP" id="MF_00127">
    <property type="entry name" value="His_tRNA_synth"/>
    <property type="match status" value="1"/>
</dbReference>
<dbReference type="InterPro" id="IPR006195">
    <property type="entry name" value="aa-tRNA-synth_II"/>
</dbReference>
<dbReference type="InterPro" id="IPR045864">
    <property type="entry name" value="aa-tRNA-synth_II/BPL/LPL"/>
</dbReference>
<dbReference type="InterPro" id="IPR004154">
    <property type="entry name" value="Anticodon-bd"/>
</dbReference>
<dbReference type="InterPro" id="IPR036621">
    <property type="entry name" value="Anticodon-bd_dom_sf"/>
</dbReference>
<dbReference type="InterPro" id="IPR015807">
    <property type="entry name" value="His-tRNA-ligase"/>
</dbReference>
<dbReference type="InterPro" id="IPR041715">
    <property type="entry name" value="HisRS-like_core"/>
</dbReference>
<dbReference type="InterPro" id="IPR004516">
    <property type="entry name" value="HisRS/HisZ"/>
</dbReference>
<dbReference type="InterPro" id="IPR033656">
    <property type="entry name" value="HisRS_anticodon"/>
</dbReference>
<dbReference type="NCBIfam" id="TIGR00442">
    <property type="entry name" value="hisS"/>
    <property type="match status" value="1"/>
</dbReference>
<dbReference type="PANTHER" id="PTHR43707:SF1">
    <property type="entry name" value="HISTIDINE--TRNA LIGASE, MITOCHONDRIAL-RELATED"/>
    <property type="match status" value="1"/>
</dbReference>
<dbReference type="PANTHER" id="PTHR43707">
    <property type="entry name" value="HISTIDYL-TRNA SYNTHETASE"/>
    <property type="match status" value="1"/>
</dbReference>
<dbReference type="Pfam" id="PF03129">
    <property type="entry name" value="HGTP_anticodon"/>
    <property type="match status" value="1"/>
</dbReference>
<dbReference type="Pfam" id="PF13393">
    <property type="entry name" value="tRNA-synt_His"/>
    <property type="match status" value="1"/>
</dbReference>
<dbReference type="PIRSF" id="PIRSF001549">
    <property type="entry name" value="His-tRNA_synth"/>
    <property type="match status" value="1"/>
</dbReference>
<dbReference type="SUPFAM" id="SSF52954">
    <property type="entry name" value="Class II aaRS ABD-related"/>
    <property type="match status" value="1"/>
</dbReference>
<dbReference type="SUPFAM" id="SSF55681">
    <property type="entry name" value="Class II aaRS and biotin synthetases"/>
    <property type="match status" value="1"/>
</dbReference>
<dbReference type="PROSITE" id="PS50862">
    <property type="entry name" value="AA_TRNA_LIGASE_II"/>
    <property type="match status" value="1"/>
</dbReference>
<name>SYH_ACTSZ</name>
<proteinExistence type="inferred from homology"/>
<protein>
    <recommendedName>
        <fullName evidence="1">Histidine--tRNA ligase</fullName>
        <ecNumber evidence="1">6.1.1.21</ecNumber>
    </recommendedName>
    <alternativeName>
        <fullName evidence="1">Histidyl-tRNA synthetase</fullName>
        <shortName evidence="1">HisRS</shortName>
    </alternativeName>
</protein>
<organism>
    <name type="scientific">Actinobacillus succinogenes (strain ATCC 55618 / DSM 22257 / CCUG 43843 / 130Z)</name>
    <dbReference type="NCBI Taxonomy" id="339671"/>
    <lineage>
        <taxon>Bacteria</taxon>
        <taxon>Pseudomonadati</taxon>
        <taxon>Pseudomonadota</taxon>
        <taxon>Gammaproteobacteria</taxon>
        <taxon>Pasteurellales</taxon>
        <taxon>Pasteurellaceae</taxon>
        <taxon>Actinobacillus</taxon>
    </lineage>
</organism>
<evidence type="ECO:0000255" key="1">
    <source>
        <dbReference type="HAMAP-Rule" id="MF_00127"/>
    </source>
</evidence>
<sequence>MANIIKAIRGMNDCSPTDSPLWQWIEDKVRNVLASYGYSEVRMPIVESTPLFARAIGEVTDVVSKEMYTFWDNDEQLTLRPEGTAGCVRAAIENGWIYNNEQRLWYMGPMFRHERPQKGRYRQFHQAGVEIFGIANPEIDAELIILTARLWKELGIEQHVSLQLNSIGSLAARAGYRTALVAFLENHQALMSDEEKERLLKNPLRILDTKNEALQEVLNDAPKLLDYLDDESRQHFTQLCALLDNMGVQYEINPKLVRGLDYYNKTVFEWVTSALGAQGTVCGGGRYDGLVEQLGGHATQGVGFAMGLERLVLLVQEVNKNISVPNAVDIYVVFSGEGTTLAAFQTAEKIRSELPHLRVMTHCSGGKFQKQFKRADKLGAKLALVIGESEVQTDRVVVKDLSGAVEQQTISVVELIDYLKRVF</sequence>
<reference key="1">
    <citation type="journal article" date="2010" name="BMC Genomics">
        <title>A genomic perspective on the potential of Actinobacillus succinogenes for industrial succinate production.</title>
        <authorList>
            <person name="McKinlay J.B."/>
            <person name="Laivenieks M."/>
            <person name="Schindler B.D."/>
            <person name="McKinlay A.A."/>
            <person name="Siddaramappa S."/>
            <person name="Challacombe J.F."/>
            <person name="Lowry S.R."/>
            <person name="Clum A."/>
            <person name="Lapidus A.L."/>
            <person name="Burkhart K.B."/>
            <person name="Harkins V."/>
            <person name="Vieille C."/>
        </authorList>
    </citation>
    <scope>NUCLEOTIDE SEQUENCE [LARGE SCALE GENOMIC DNA]</scope>
    <source>
        <strain>ATCC 55618 / DSM 22257 / CCUG 43843 / 130Z</strain>
    </source>
</reference>